<protein>
    <recommendedName>
        <fullName evidence="1">Nucleoprotein</fullName>
        <ecNumber evidence="1">3.1.13.-</ecNumber>
    </recommendedName>
    <alternativeName>
        <fullName evidence="1">Nucleocapsid protein</fullName>
    </alternativeName>
    <alternativeName>
        <fullName evidence="1">Protein N</fullName>
    </alternativeName>
</protein>
<organismHost>
    <name type="scientific">Praomys</name>
    <name type="common">African soft-furred rats</name>
    <dbReference type="NCBI Taxonomy" id="10111"/>
</organismHost>
<accession>Q27YE3</accession>
<evidence type="ECO:0000255" key="1">
    <source>
        <dbReference type="HAMAP-Rule" id="MF_04085"/>
    </source>
</evidence>
<evidence type="ECO:0000256" key="2">
    <source>
        <dbReference type="SAM" id="MobiDB-lite"/>
    </source>
</evidence>
<reference key="1">
    <citation type="journal article" date="2006" name="Virology">
        <title>Phylogeny and evolution of old world arenaviruses.</title>
        <authorList>
            <person name="Emonet S."/>
            <person name="Lemasson J.J."/>
            <person name="Gonzalez J.P."/>
            <person name="de Lamballerie X."/>
            <person name="Charrel R.N."/>
        </authorList>
    </citation>
    <scope>NUCLEOTIDE SEQUENCE [GENOMIC RNA]</scope>
</reference>
<reference key="2">
    <citation type="journal article" date="2008" name="Curr. Opin. Microbiol.">
        <title>Phylogeny of the genus Arenavirus.</title>
        <authorList>
            <person name="Charrel R.N."/>
            <person name="de Lamballerie X."/>
            <person name="Emonet S."/>
        </authorList>
    </citation>
    <scope>NUCLEOTIDE SEQUENCE [GENOMIC RNA]</scope>
</reference>
<dbReference type="EC" id="3.1.13.-" evidence="1"/>
<dbReference type="EMBL" id="DQ328877">
    <property type="protein sequence ID" value="ABC71141.1"/>
    <property type="molecule type" value="Genomic_RNA"/>
</dbReference>
<dbReference type="SMR" id="Q27YE3"/>
<dbReference type="KEGG" id="vg:3953118"/>
<dbReference type="OrthoDB" id="3135at10239"/>
<dbReference type="Proteomes" id="UP000009261">
    <property type="component" value="Genome"/>
</dbReference>
<dbReference type="GO" id="GO:0019029">
    <property type="term" value="C:helical viral capsid"/>
    <property type="evidence" value="ECO:0007669"/>
    <property type="project" value="UniProtKB-UniRule"/>
</dbReference>
<dbReference type="GO" id="GO:0030430">
    <property type="term" value="C:host cell cytoplasm"/>
    <property type="evidence" value="ECO:0007669"/>
    <property type="project" value="UniProtKB-SubCell"/>
</dbReference>
<dbReference type="GO" id="GO:1990904">
    <property type="term" value="C:ribonucleoprotein complex"/>
    <property type="evidence" value="ECO:0007669"/>
    <property type="project" value="UniProtKB-KW"/>
</dbReference>
<dbReference type="GO" id="GO:0019013">
    <property type="term" value="C:viral nucleocapsid"/>
    <property type="evidence" value="ECO:0007669"/>
    <property type="project" value="UniProtKB-UniRule"/>
</dbReference>
<dbReference type="GO" id="GO:0016787">
    <property type="term" value="F:hydrolase activity"/>
    <property type="evidence" value="ECO:0007669"/>
    <property type="project" value="UniProtKB-KW"/>
</dbReference>
<dbReference type="GO" id="GO:0046872">
    <property type="term" value="F:metal ion binding"/>
    <property type="evidence" value="ECO:0007669"/>
    <property type="project" value="UniProtKB-UniRule"/>
</dbReference>
<dbReference type="GO" id="GO:0003723">
    <property type="term" value="F:RNA binding"/>
    <property type="evidence" value="ECO:0007669"/>
    <property type="project" value="UniProtKB-UniRule"/>
</dbReference>
<dbReference type="GO" id="GO:0039689">
    <property type="term" value="P:negative stranded viral RNA replication"/>
    <property type="evidence" value="ECO:0000250"/>
    <property type="project" value="UniProtKB"/>
</dbReference>
<dbReference type="GO" id="GO:0039696">
    <property type="term" value="P:RNA-templated viral transcription"/>
    <property type="evidence" value="ECO:0000250"/>
    <property type="project" value="UniProtKB"/>
</dbReference>
<dbReference type="GO" id="GO:0039724">
    <property type="term" value="P:symbiont-mediated suppression of host cytoplasmic pattern recognition receptor signaling pathway via inhibition of IKBKE activity"/>
    <property type="evidence" value="ECO:0007669"/>
    <property type="project" value="UniProtKB-UniRule"/>
</dbReference>
<dbReference type="FunFam" id="1.10.150.550:FF:000001">
    <property type="entry name" value="Nucleoprotein"/>
    <property type="match status" value="1"/>
</dbReference>
<dbReference type="FunFam" id="1.10.150.550:FF:000002">
    <property type="entry name" value="Nucleoprotein"/>
    <property type="match status" value="1"/>
</dbReference>
<dbReference type="FunFam" id="1.10.150.550:FF:000003">
    <property type="entry name" value="Nucleoprotein"/>
    <property type="match status" value="1"/>
</dbReference>
<dbReference type="FunFam" id="3.30.420.410:FF:000001">
    <property type="entry name" value="Nucleoprotein"/>
    <property type="match status" value="1"/>
</dbReference>
<dbReference type="Gene3D" id="3.30.420.410">
    <property type="entry name" value="Arenaviral nucleoprotein, C-terminal domain"/>
    <property type="match status" value="1"/>
</dbReference>
<dbReference type="Gene3D" id="1.10.150.550">
    <property type="entry name" value="Arenavirus nucleocapsid protein, head domain"/>
    <property type="match status" value="3"/>
</dbReference>
<dbReference type="HAMAP" id="MF_04085">
    <property type="entry name" value="ARENA_NCAP"/>
    <property type="match status" value="1"/>
</dbReference>
<dbReference type="InterPro" id="IPR000229">
    <property type="entry name" value="Nucleocapsid_arenaviridae"/>
</dbReference>
<dbReference type="InterPro" id="IPR035084">
    <property type="entry name" value="Nucleocapsid_C_arenaviridae"/>
</dbReference>
<dbReference type="InterPro" id="IPR038115">
    <property type="entry name" value="Nucleocapsid_C_sf"/>
</dbReference>
<dbReference type="InterPro" id="IPR035083">
    <property type="entry name" value="Nucleocapsid_N_arenaviridae"/>
</dbReference>
<dbReference type="Pfam" id="PF17290">
    <property type="entry name" value="Arena_ncap_C"/>
    <property type="match status" value="1"/>
</dbReference>
<dbReference type="Pfam" id="PF00843">
    <property type="entry name" value="Arena_nucleocap"/>
    <property type="match status" value="1"/>
</dbReference>
<dbReference type="PIRSF" id="PIRSF004029">
    <property type="entry name" value="N_ArenaV"/>
    <property type="match status" value="1"/>
</dbReference>
<name>NCAP_IPPYV</name>
<feature type="chain" id="PRO_0000361008" description="Nucleoprotein">
    <location>
        <begin position="1"/>
        <end position="570"/>
    </location>
</feature>
<feature type="region of interest" description="Binding site for the cap structure m7GTP" evidence="1">
    <location>
        <begin position="54"/>
        <end position="241"/>
    </location>
</feature>
<feature type="region of interest" description="Disordered" evidence="2">
    <location>
        <begin position="342"/>
        <end position="361"/>
    </location>
</feature>
<feature type="binding site" evidence="1">
    <location>
        <position position="390"/>
    </location>
    <ligand>
        <name>Mn(2+)</name>
        <dbReference type="ChEBI" id="CHEBI:29035"/>
    </ligand>
</feature>
<feature type="binding site" evidence="1">
    <location>
        <position position="392"/>
    </location>
    <ligand>
        <name>Mn(2+)</name>
        <dbReference type="ChEBI" id="CHEBI:29035"/>
    </ligand>
</feature>
<feature type="binding site" evidence="1">
    <location>
        <position position="400"/>
    </location>
    <ligand>
        <name>Zn(2+)</name>
        <dbReference type="ChEBI" id="CHEBI:29105"/>
    </ligand>
</feature>
<feature type="binding site" evidence="1">
    <location>
        <position position="507"/>
    </location>
    <ligand>
        <name>Zn(2+)</name>
        <dbReference type="ChEBI" id="CHEBI:29105"/>
    </ligand>
</feature>
<feature type="binding site" evidence="1">
    <location>
        <position position="510"/>
    </location>
    <ligand>
        <name>Zn(2+)</name>
        <dbReference type="ChEBI" id="CHEBI:29105"/>
    </ligand>
</feature>
<feature type="binding site" evidence="1">
    <location>
        <position position="530"/>
    </location>
    <ligand>
        <name>Zn(2+)</name>
        <dbReference type="ChEBI" id="CHEBI:29105"/>
    </ligand>
</feature>
<feature type="binding site" evidence="1">
    <location>
        <position position="534"/>
    </location>
    <ligand>
        <name>Mn(2+)</name>
        <dbReference type="ChEBI" id="CHEBI:29035"/>
    </ligand>
</feature>
<feature type="site" description="Important for exonuclease activity" evidence="1">
    <location>
        <position position="467"/>
    </location>
</feature>
<organism>
    <name type="scientific">Ippy mammarenavirus (isolate Rat/Central African Republic/Dak An B 188 d/1970)</name>
    <name type="common">IPPYV</name>
    <dbReference type="NCBI Taxonomy" id="3052308"/>
    <lineage>
        <taxon>Viruses</taxon>
        <taxon>Riboviria</taxon>
        <taxon>Orthornavirae</taxon>
        <taxon>Negarnaviricota</taxon>
        <taxon>Polyploviricotina</taxon>
        <taxon>Ellioviricetes</taxon>
        <taxon>Bunyavirales</taxon>
        <taxon>Arenaviridae</taxon>
        <taxon>Mammarenavirus</taxon>
    </lineage>
</organism>
<keyword id="KW-0167">Capsid protein</keyword>
<keyword id="KW-1139">Helical capsid protein</keyword>
<keyword id="KW-1035">Host cytoplasm</keyword>
<keyword id="KW-0945">Host-virus interaction</keyword>
<keyword id="KW-0378">Hydrolase</keyword>
<keyword id="KW-1224">Inhibition of host IKBKE by virus</keyword>
<keyword id="KW-1090">Inhibition of host innate immune response by virus</keyword>
<keyword id="KW-1113">Inhibition of host RLR pathway by virus</keyword>
<keyword id="KW-0922">Interferon antiviral system evasion</keyword>
<keyword id="KW-0464">Manganese</keyword>
<keyword id="KW-0479">Metal-binding</keyword>
<keyword id="KW-0687">Ribonucleoprotein</keyword>
<keyword id="KW-0694">RNA-binding</keyword>
<keyword id="KW-0899">Viral immunoevasion</keyword>
<keyword id="KW-0543">Viral nucleoprotein</keyword>
<keyword id="KW-0946">Virion</keyword>
<keyword id="KW-0862">Zinc</keyword>
<sequence length="570" mass="63431">MANSKEVKSFLWTQALRRELGQYCSTVKSSIIKDAQSLLHSLDFSEVSNIQRLMRKDKRNDSDLKRLRDLNQAVFNLVELKSTQQKNVLRVGKLTSDDLLVLAADLDRLKNKVMRTERPQTLGVYMGNLTNQQLDQRKRLLDMIGISNARNAPRPGADGVVRVWDVKDSSLLNNQFGTMPSLTLACMSKQGQYELNDVVQSLTDLGLVYAAKYPNAMDLEKLTQAHPVLSIIDVSKSSINVSGYNFSLSAAVKAGACMLDGGNMLETLKVTPQNLEDILASMLKVKRAHSMFVSDTPGDRNPYENLLYKVCLSGNGWPYIACRTSLTGRAWDNTVVDLGPPIDLSQNKQMSPAKPKGAGHGMPSGLTMSQILALKDLMAAVDPNAKTWIDIEGRAEDPVEIAFYQPQTGAYIHFYREPTDAKQFKQDSKYSHGIDIGDLFNVQPGLTSAVLELLPPNMVLTCQGSEDIRRLLDSQGRKDIKLIDVLMSKSEARKFEDEVWDKFGFLCKIHTGHVVEKKKRGNKEEITPHCALLDCLMYEAASTGRFSPGSIRAVLPRDMVFRAVTEKVAL</sequence>
<comment type="function">
    <text evidence="1">Encapsidates the genome, protecting it from nucleases. The encapsidated genomic RNA is termed the nucleocapsid (NC). Serves as template for viral transcription and replication. The increased presence of protein N in host cell does not seem to trigger the switch from transcription to replication as observed in other negative strain RNA viruses. Through the interaction with host IKBKE, strongly inhibits the phosphorylation and nuclear translocation of host IRF3, a protein involved in interferon activation pathway, leading to the inhibition of interferon-beta and IRF3-dependent promoters activation. Also encodes a functional 3'-5' exoribonuclease that degrades preferentially dsRNA substrates and thereby participates in the suppression of interferon induction.</text>
</comment>
<comment type="subunit">
    <text evidence="1">Homomultimerizes to form the nucleocapsid. Binds to viral genomic RNA. Interacts with glycoprotein G2. Interacts with protein Z; this interaction probably directs the encapsidated genome to budding sites. Interacts with protein L; this interaction does not interfere with Z-L interaction. Interacts with host IKBKE (via Protein kinase domain); the interaction inhibits IKBKE kinase activity.</text>
</comment>
<comment type="subcellular location">
    <subcellularLocation>
        <location evidence="1">Virion</location>
    </subcellularLocation>
    <subcellularLocation>
        <location evidence="1">Host cytoplasm</location>
    </subcellularLocation>
</comment>
<comment type="domain">
    <text evidence="1">The N-terminal region is important for the cap-binding activity while the C-terminal region contains the 3'-5' exoribonuclease activity. A CCHE zinc binding site is present in the C-terminal region and may thus contribute to the substrate binding and/or the specificity of the exonuclease activity.</text>
</comment>
<comment type="similarity">
    <text evidence="1">Belongs to the arenaviridae nucleocapsid protein family.</text>
</comment>
<proteinExistence type="inferred from homology"/>
<gene>
    <name evidence="1" type="primary">N</name>
</gene>